<comment type="function">
    <text evidence="1">Catalyzes the NADPH-dependent rearrangement and reduction of 1-deoxy-D-xylulose-5-phosphate (DXP) to 2-C-methyl-D-erythritol 4-phosphate (MEP).</text>
</comment>
<comment type="catalytic activity">
    <reaction evidence="1">
        <text>2-C-methyl-D-erythritol 4-phosphate + NADP(+) = 1-deoxy-D-xylulose 5-phosphate + NADPH + H(+)</text>
        <dbReference type="Rhea" id="RHEA:13717"/>
        <dbReference type="ChEBI" id="CHEBI:15378"/>
        <dbReference type="ChEBI" id="CHEBI:57783"/>
        <dbReference type="ChEBI" id="CHEBI:57792"/>
        <dbReference type="ChEBI" id="CHEBI:58262"/>
        <dbReference type="ChEBI" id="CHEBI:58349"/>
        <dbReference type="EC" id="1.1.1.267"/>
    </reaction>
    <physiologicalReaction direction="right-to-left" evidence="1">
        <dbReference type="Rhea" id="RHEA:13719"/>
    </physiologicalReaction>
</comment>
<comment type="cofactor">
    <cofactor evidence="1">
        <name>Mg(2+)</name>
        <dbReference type="ChEBI" id="CHEBI:18420"/>
    </cofactor>
    <cofactor evidence="1">
        <name>Mn(2+)</name>
        <dbReference type="ChEBI" id="CHEBI:29035"/>
    </cofactor>
</comment>
<comment type="pathway">
    <text evidence="1">Isoprenoid biosynthesis; isopentenyl diphosphate biosynthesis via DXP pathway; isopentenyl diphosphate from 1-deoxy-D-xylulose 5-phosphate: step 1/6.</text>
</comment>
<comment type="similarity">
    <text evidence="1">Belongs to the DXR family.</text>
</comment>
<sequence>MEMTRGICILGATGSIGKSTLDVVSRHPDQFRIVALTGNHRVAEMQLLCQQHHPELVVMAAPEAAQQLRVGLGDAGLKKIQVESGPEALAEAARMSGVDEVMAAIVGAAGLLPTLAAVEAGKKVYLANKECLVMAGNLFMERVRQHQVTLLPIDSEHNAVFQCFADGKGVRRILLTASGGPFRTWPAEHLAVVTPDQACAHPNWVMGRKISVDSATMMNKGLEVIEAHWLFDLPASRIDVMIHPQSIIHSMVEYVDGSVLAQLGNPDMRTPIAHALAFPERMESGVSSLDLAHGPDLQFEAPDLQRFPCLALAFDALQAGGAAATVLNAANEIAVQAFLEGHLPFLRIAAVVEDTLGELQPAAPDHLDDVLAIDQLAREVALRHLARHGSGMQ</sequence>
<gene>
    <name evidence="1" type="primary">dxr</name>
    <name type="ordered locus">AFE_1450</name>
</gene>
<feature type="chain" id="PRO_1000118490" description="1-deoxy-D-xylulose 5-phosphate reductoisomerase">
    <location>
        <begin position="1"/>
        <end position="393"/>
    </location>
</feature>
<feature type="binding site" evidence="1">
    <location>
        <position position="13"/>
    </location>
    <ligand>
        <name>NADPH</name>
        <dbReference type="ChEBI" id="CHEBI:57783"/>
    </ligand>
</feature>
<feature type="binding site" evidence="1">
    <location>
        <position position="14"/>
    </location>
    <ligand>
        <name>NADPH</name>
        <dbReference type="ChEBI" id="CHEBI:57783"/>
    </ligand>
</feature>
<feature type="binding site" evidence="1">
    <location>
        <position position="15"/>
    </location>
    <ligand>
        <name>NADPH</name>
        <dbReference type="ChEBI" id="CHEBI:57783"/>
    </ligand>
</feature>
<feature type="binding site" evidence="1">
    <location>
        <position position="16"/>
    </location>
    <ligand>
        <name>NADPH</name>
        <dbReference type="ChEBI" id="CHEBI:57783"/>
    </ligand>
</feature>
<feature type="binding site" evidence="1">
    <location>
        <position position="128"/>
    </location>
    <ligand>
        <name>NADPH</name>
        <dbReference type="ChEBI" id="CHEBI:57783"/>
    </ligand>
</feature>
<feature type="binding site" evidence="1">
    <location>
        <position position="129"/>
    </location>
    <ligand>
        <name>1-deoxy-D-xylulose 5-phosphate</name>
        <dbReference type="ChEBI" id="CHEBI:57792"/>
    </ligand>
</feature>
<feature type="binding site" evidence="1">
    <location>
        <position position="130"/>
    </location>
    <ligand>
        <name>NADPH</name>
        <dbReference type="ChEBI" id="CHEBI:57783"/>
    </ligand>
</feature>
<feature type="binding site" evidence="1">
    <location>
        <position position="154"/>
    </location>
    <ligand>
        <name>Mn(2+)</name>
        <dbReference type="ChEBI" id="CHEBI:29035"/>
    </ligand>
</feature>
<feature type="binding site" evidence="1">
    <location>
        <position position="155"/>
    </location>
    <ligand>
        <name>1-deoxy-D-xylulose 5-phosphate</name>
        <dbReference type="ChEBI" id="CHEBI:57792"/>
    </ligand>
</feature>
<feature type="binding site" evidence="1">
    <location>
        <position position="156"/>
    </location>
    <ligand>
        <name>1-deoxy-D-xylulose 5-phosphate</name>
        <dbReference type="ChEBI" id="CHEBI:57792"/>
    </ligand>
</feature>
<feature type="binding site" evidence="1">
    <location>
        <position position="156"/>
    </location>
    <ligand>
        <name>Mn(2+)</name>
        <dbReference type="ChEBI" id="CHEBI:29035"/>
    </ligand>
</feature>
<feature type="binding site" evidence="1">
    <location>
        <position position="178"/>
    </location>
    <ligand>
        <name>1-deoxy-D-xylulose 5-phosphate</name>
        <dbReference type="ChEBI" id="CHEBI:57792"/>
    </ligand>
</feature>
<feature type="binding site" evidence="1">
    <location>
        <position position="201"/>
    </location>
    <ligand>
        <name>1-deoxy-D-xylulose 5-phosphate</name>
        <dbReference type="ChEBI" id="CHEBI:57792"/>
    </ligand>
</feature>
<feature type="binding site" evidence="1">
    <location>
        <position position="207"/>
    </location>
    <ligand>
        <name>NADPH</name>
        <dbReference type="ChEBI" id="CHEBI:57783"/>
    </ligand>
</feature>
<feature type="binding site" evidence="1">
    <location>
        <position position="214"/>
    </location>
    <ligand>
        <name>1-deoxy-D-xylulose 5-phosphate</name>
        <dbReference type="ChEBI" id="CHEBI:57792"/>
    </ligand>
</feature>
<feature type="binding site" evidence="1">
    <location>
        <position position="219"/>
    </location>
    <ligand>
        <name>1-deoxy-D-xylulose 5-phosphate</name>
        <dbReference type="ChEBI" id="CHEBI:57792"/>
    </ligand>
</feature>
<feature type="binding site" evidence="1">
    <location>
        <position position="220"/>
    </location>
    <ligand>
        <name>1-deoxy-D-xylulose 5-phosphate</name>
        <dbReference type="ChEBI" id="CHEBI:57792"/>
    </ligand>
</feature>
<feature type="binding site" evidence="1">
    <location>
        <position position="223"/>
    </location>
    <ligand>
        <name>1-deoxy-D-xylulose 5-phosphate</name>
        <dbReference type="ChEBI" id="CHEBI:57792"/>
    </ligand>
</feature>
<feature type="binding site" evidence="1">
    <location>
        <position position="223"/>
    </location>
    <ligand>
        <name>Mn(2+)</name>
        <dbReference type="ChEBI" id="CHEBI:29035"/>
    </ligand>
</feature>
<evidence type="ECO:0000255" key="1">
    <source>
        <dbReference type="HAMAP-Rule" id="MF_00183"/>
    </source>
</evidence>
<protein>
    <recommendedName>
        <fullName evidence="1">1-deoxy-D-xylulose 5-phosphate reductoisomerase</fullName>
        <shortName evidence="1">DXP reductoisomerase</shortName>
        <ecNumber evidence="1">1.1.1.267</ecNumber>
    </recommendedName>
    <alternativeName>
        <fullName evidence="1">1-deoxyxylulose-5-phosphate reductoisomerase</fullName>
    </alternativeName>
    <alternativeName>
        <fullName evidence="1">2-C-methyl-D-erythritol 4-phosphate synthase</fullName>
    </alternativeName>
</protein>
<keyword id="KW-0414">Isoprene biosynthesis</keyword>
<keyword id="KW-0464">Manganese</keyword>
<keyword id="KW-0479">Metal-binding</keyword>
<keyword id="KW-0521">NADP</keyword>
<keyword id="KW-0560">Oxidoreductase</keyword>
<keyword id="KW-1185">Reference proteome</keyword>
<accession>B7J9P7</accession>
<reference key="1">
    <citation type="journal article" date="2008" name="BMC Genomics">
        <title>Acidithiobacillus ferrooxidans metabolism: from genome sequence to industrial applications.</title>
        <authorList>
            <person name="Valdes J."/>
            <person name="Pedroso I."/>
            <person name="Quatrini R."/>
            <person name="Dodson R.J."/>
            <person name="Tettelin H."/>
            <person name="Blake R. II"/>
            <person name="Eisen J.A."/>
            <person name="Holmes D.S."/>
        </authorList>
    </citation>
    <scope>NUCLEOTIDE SEQUENCE [LARGE SCALE GENOMIC DNA]</scope>
    <source>
        <strain>ATCC 23270 / DSM 14882 / CIP 104768 / NCIMB 8455</strain>
    </source>
</reference>
<proteinExistence type="inferred from homology"/>
<dbReference type="EC" id="1.1.1.267" evidence="1"/>
<dbReference type="EMBL" id="CP001219">
    <property type="protein sequence ID" value="ACK78432.1"/>
    <property type="molecule type" value="Genomic_DNA"/>
</dbReference>
<dbReference type="SMR" id="B7J9P7"/>
<dbReference type="STRING" id="243159.AFE_1450"/>
<dbReference type="PaxDb" id="243159-AFE_1450"/>
<dbReference type="KEGG" id="afr:AFE_1450"/>
<dbReference type="eggNOG" id="COG0743">
    <property type="taxonomic scope" value="Bacteria"/>
</dbReference>
<dbReference type="HOGENOM" id="CLU_035714_4_0_6"/>
<dbReference type="UniPathway" id="UPA00056">
    <property type="reaction ID" value="UER00092"/>
</dbReference>
<dbReference type="Proteomes" id="UP000001362">
    <property type="component" value="Chromosome"/>
</dbReference>
<dbReference type="GO" id="GO:0030604">
    <property type="term" value="F:1-deoxy-D-xylulose-5-phosphate reductoisomerase activity"/>
    <property type="evidence" value="ECO:0007669"/>
    <property type="project" value="UniProtKB-UniRule"/>
</dbReference>
<dbReference type="GO" id="GO:0030145">
    <property type="term" value="F:manganese ion binding"/>
    <property type="evidence" value="ECO:0007669"/>
    <property type="project" value="TreeGrafter"/>
</dbReference>
<dbReference type="GO" id="GO:0070402">
    <property type="term" value="F:NADPH binding"/>
    <property type="evidence" value="ECO:0007669"/>
    <property type="project" value="InterPro"/>
</dbReference>
<dbReference type="GO" id="GO:0051484">
    <property type="term" value="P:isopentenyl diphosphate biosynthetic process, methylerythritol 4-phosphate pathway involved in terpenoid biosynthetic process"/>
    <property type="evidence" value="ECO:0007669"/>
    <property type="project" value="TreeGrafter"/>
</dbReference>
<dbReference type="FunFam" id="3.40.50.720:FF:000045">
    <property type="entry name" value="1-deoxy-D-xylulose 5-phosphate reductoisomerase"/>
    <property type="match status" value="1"/>
</dbReference>
<dbReference type="Gene3D" id="1.10.1740.10">
    <property type="match status" value="1"/>
</dbReference>
<dbReference type="Gene3D" id="3.40.50.720">
    <property type="entry name" value="NAD(P)-binding Rossmann-like Domain"/>
    <property type="match status" value="1"/>
</dbReference>
<dbReference type="HAMAP" id="MF_00183">
    <property type="entry name" value="DXP_reductoisom"/>
    <property type="match status" value="1"/>
</dbReference>
<dbReference type="InterPro" id="IPR003821">
    <property type="entry name" value="DXP_reductoisomerase"/>
</dbReference>
<dbReference type="InterPro" id="IPR013644">
    <property type="entry name" value="DXP_reductoisomerase_C"/>
</dbReference>
<dbReference type="InterPro" id="IPR013512">
    <property type="entry name" value="DXP_reductoisomerase_N"/>
</dbReference>
<dbReference type="InterPro" id="IPR026877">
    <property type="entry name" value="DXPR_C"/>
</dbReference>
<dbReference type="InterPro" id="IPR036169">
    <property type="entry name" value="DXPR_C_sf"/>
</dbReference>
<dbReference type="InterPro" id="IPR036291">
    <property type="entry name" value="NAD(P)-bd_dom_sf"/>
</dbReference>
<dbReference type="NCBIfam" id="TIGR00243">
    <property type="entry name" value="Dxr"/>
    <property type="match status" value="1"/>
</dbReference>
<dbReference type="NCBIfam" id="NF003938">
    <property type="entry name" value="PRK05447.1-1"/>
    <property type="match status" value="1"/>
</dbReference>
<dbReference type="NCBIfam" id="NF009114">
    <property type="entry name" value="PRK12464.1"/>
    <property type="match status" value="1"/>
</dbReference>
<dbReference type="PANTHER" id="PTHR30525">
    <property type="entry name" value="1-DEOXY-D-XYLULOSE 5-PHOSPHATE REDUCTOISOMERASE"/>
    <property type="match status" value="1"/>
</dbReference>
<dbReference type="PANTHER" id="PTHR30525:SF0">
    <property type="entry name" value="1-DEOXY-D-XYLULOSE 5-PHOSPHATE REDUCTOISOMERASE, CHLOROPLASTIC"/>
    <property type="match status" value="1"/>
</dbReference>
<dbReference type="Pfam" id="PF08436">
    <property type="entry name" value="DXP_redisom_C"/>
    <property type="match status" value="1"/>
</dbReference>
<dbReference type="Pfam" id="PF02670">
    <property type="entry name" value="DXP_reductoisom"/>
    <property type="match status" value="1"/>
</dbReference>
<dbReference type="Pfam" id="PF13288">
    <property type="entry name" value="DXPR_C"/>
    <property type="match status" value="1"/>
</dbReference>
<dbReference type="PIRSF" id="PIRSF006205">
    <property type="entry name" value="Dxp_reductismrs"/>
    <property type="match status" value="1"/>
</dbReference>
<dbReference type="SUPFAM" id="SSF69055">
    <property type="entry name" value="1-deoxy-D-xylulose-5-phosphate reductoisomerase, C-terminal domain"/>
    <property type="match status" value="1"/>
</dbReference>
<dbReference type="SUPFAM" id="SSF55347">
    <property type="entry name" value="Glyceraldehyde-3-phosphate dehydrogenase-like, C-terminal domain"/>
    <property type="match status" value="1"/>
</dbReference>
<dbReference type="SUPFAM" id="SSF51735">
    <property type="entry name" value="NAD(P)-binding Rossmann-fold domains"/>
    <property type="match status" value="1"/>
</dbReference>
<organism>
    <name type="scientific">Acidithiobacillus ferrooxidans (strain ATCC 23270 / DSM 14882 / CIP 104768 / NCIMB 8455)</name>
    <name type="common">Ferrobacillus ferrooxidans (strain ATCC 23270)</name>
    <dbReference type="NCBI Taxonomy" id="243159"/>
    <lineage>
        <taxon>Bacteria</taxon>
        <taxon>Pseudomonadati</taxon>
        <taxon>Pseudomonadota</taxon>
        <taxon>Acidithiobacillia</taxon>
        <taxon>Acidithiobacillales</taxon>
        <taxon>Acidithiobacillaceae</taxon>
        <taxon>Acidithiobacillus</taxon>
    </lineage>
</organism>
<name>DXR_ACIF2</name>